<organism>
    <name type="scientific">Anaeromyxobacter sp. (strain K)</name>
    <dbReference type="NCBI Taxonomy" id="447217"/>
    <lineage>
        <taxon>Bacteria</taxon>
        <taxon>Pseudomonadati</taxon>
        <taxon>Myxococcota</taxon>
        <taxon>Myxococcia</taxon>
        <taxon>Myxococcales</taxon>
        <taxon>Cystobacterineae</taxon>
        <taxon>Anaeromyxobacteraceae</taxon>
        <taxon>Anaeromyxobacter</taxon>
    </lineage>
</organism>
<name>PAND_ANASK</name>
<proteinExistence type="inferred from homology"/>
<dbReference type="EC" id="4.1.1.11" evidence="1"/>
<dbReference type="EMBL" id="CP001131">
    <property type="protein sequence ID" value="ACG75370.1"/>
    <property type="molecule type" value="Genomic_DNA"/>
</dbReference>
<dbReference type="RefSeq" id="WP_012528123.1">
    <property type="nucleotide sequence ID" value="NC_011145.1"/>
</dbReference>
<dbReference type="SMR" id="B4UHC8"/>
<dbReference type="KEGG" id="ank:AnaeK_4167"/>
<dbReference type="HOGENOM" id="CLU_115305_2_0_7"/>
<dbReference type="OrthoDB" id="9803983at2"/>
<dbReference type="UniPathway" id="UPA00028">
    <property type="reaction ID" value="UER00002"/>
</dbReference>
<dbReference type="Proteomes" id="UP000001871">
    <property type="component" value="Chromosome"/>
</dbReference>
<dbReference type="GO" id="GO:0005829">
    <property type="term" value="C:cytosol"/>
    <property type="evidence" value="ECO:0007669"/>
    <property type="project" value="TreeGrafter"/>
</dbReference>
<dbReference type="GO" id="GO:0004068">
    <property type="term" value="F:aspartate 1-decarboxylase activity"/>
    <property type="evidence" value="ECO:0007669"/>
    <property type="project" value="UniProtKB-UniRule"/>
</dbReference>
<dbReference type="GO" id="GO:0006523">
    <property type="term" value="P:alanine biosynthetic process"/>
    <property type="evidence" value="ECO:0007669"/>
    <property type="project" value="InterPro"/>
</dbReference>
<dbReference type="GO" id="GO:0015940">
    <property type="term" value="P:pantothenate biosynthetic process"/>
    <property type="evidence" value="ECO:0007669"/>
    <property type="project" value="UniProtKB-UniRule"/>
</dbReference>
<dbReference type="CDD" id="cd06919">
    <property type="entry name" value="Asp_decarbox"/>
    <property type="match status" value="1"/>
</dbReference>
<dbReference type="Gene3D" id="2.40.40.20">
    <property type="match status" value="1"/>
</dbReference>
<dbReference type="HAMAP" id="MF_00446">
    <property type="entry name" value="PanD"/>
    <property type="match status" value="1"/>
</dbReference>
<dbReference type="InterPro" id="IPR009010">
    <property type="entry name" value="Asp_de-COase-like_dom_sf"/>
</dbReference>
<dbReference type="InterPro" id="IPR003190">
    <property type="entry name" value="Asp_decarbox"/>
</dbReference>
<dbReference type="NCBIfam" id="TIGR00223">
    <property type="entry name" value="panD"/>
    <property type="match status" value="1"/>
</dbReference>
<dbReference type="PANTHER" id="PTHR21012">
    <property type="entry name" value="ASPARTATE 1-DECARBOXYLASE"/>
    <property type="match status" value="1"/>
</dbReference>
<dbReference type="PANTHER" id="PTHR21012:SF0">
    <property type="entry name" value="ASPARTATE 1-DECARBOXYLASE"/>
    <property type="match status" value="1"/>
</dbReference>
<dbReference type="Pfam" id="PF02261">
    <property type="entry name" value="Asp_decarbox"/>
    <property type="match status" value="1"/>
</dbReference>
<dbReference type="PIRSF" id="PIRSF006246">
    <property type="entry name" value="Asp_decarbox"/>
    <property type="match status" value="1"/>
</dbReference>
<dbReference type="SUPFAM" id="SSF50692">
    <property type="entry name" value="ADC-like"/>
    <property type="match status" value="1"/>
</dbReference>
<evidence type="ECO:0000255" key="1">
    <source>
        <dbReference type="HAMAP-Rule" id="MF_00446"/>
    </source>
</evidence>
<protein>
    <recommendedName>
        <fullName evidence="1">Aspartate 1-decarboxylase</fullName>
        <ecNumber evidence="1">4.1.1.11</ecNumber>
    </recommendedName>
    <alternativeName>
        <fullName evidence="1">Aspartate alpha-decarboxylase</fullName>
    </alternativeName>
    <component>
        <recommendedName>
            <fullName evidence="1">Aspartate 1-decarboxylase beta chain</fullName>
        </recommendedName>
    </component>
    <component>
        <recommendedName>
            <fullName evidence="1">Aspartate 1-decarboxylase alpha chain</fullName>
        </recommendedName>
    </component>
</protein>
<sequence>MRRTFFKAKIHRATVTHADLEYEGSVSIDEDLLEAAGIWEYEAVHIWNITRGTRLQTYAIKGERGSGIICINGAAAHLNRPGDMVILATFAELEEAEARDFKPTVVLVDRQNKIVAKDAVEVPGPARRVTA</sequence>
<reference key="1">
    <citation type="submission" date="2008-08" db="EMBL/GenBank/DDBJ databases">
        <title>Complete sequence of Anaeromyxobacter sp. K.</title>
        <authorList>
            <consortium name="US DOE Joint Genome Institute"/>
            <person name="Lucas S."/>
            <person name="Copeland A."/>
            <person name="Lapidus A."/>
            <person name="Glavina del Rio T."/>
            <person name="Dalin E."/>
            <person name="Tice H."/>
            <person name="Bruce D."/>
            <person name="Goodwin L."/>
            <person name="Pitluck S."/>
            <person name="Saunders E."/>
            <person name="Brettin T."/>
            <person name="Detter J.C."/>
            <person name="Han C."/>
            <person name="Larimer F."/>
            <person name="Land M."/>
            <person name="Hauser L."/>
            <person name="Kyrpides N."/>
            <person name="Ovchinnikiva G."/>
            <person name="Beliaev A."/>
        </authorList>
    </citation>
    <scope>NUCLEOTIDE SEQUENCE [LARGE SCALE GENOMIC DNA]</scope>
    <source>
        <strain>K</strain>
    </source>
</reference>
<keyword id="KW-0068">Autocatalytic cleavage</keyword>
<keyword id="KW-0963">Cytoplasm</keyword>
<keyword id="KW-0210">Decarboxylase</keyword>
<keyword id="KW-0456">Lyase</keyword>
<keyword id="KW-0566">Pantothenate biosynthesis</keyword>
<keyword id="KW-0670">Pyruvate</keyword>
<keyword id="KW-0704">Schiff base</keyword>
<keyword id="KW-0865">Zymogen</keyword>
<accession>B4UHC8</accession>
<feature type="chain" id="PRO_1000124743" description="Aspartate 1-decarboxylase beta chain" evidence="1">
    <location>
        <begin position="1"/>
        <end position="24"/>
    </location>
</feature>
<feature type="chain" id="PRO_1000124744" description="Aspartate 1-decarboxylase alpha chain" evidence="1">
    <location>
        <begin position="25"/>
        <end position="131"/>
    </location>
</feature>
<feature type="active site" description="Schiff-base intermediate with substrate; via pyruvic acid" evidence="1">
    <location>
        <position position="25"/>
    </location>
</feature>
<feature type="active site" description="Proton donor" evidence="1">
    <location>
        <position position="58"/>
    </location>
</feature>
<feature type="binding site" evidence="1">
    <location>
        <position position="57"/>
    </location>
    <ligand>
        <name>substrate</name>
    </ligand>
</feature>
<feature type="binding site" evidence="1">
    <location>
        <begin position="73"/>
        <end position="75"/>
    </location>
    <ligand>
        <name>substrate</name>
    </ligand>
</feature>
<feature type="modified residue" description="Pyruvic acid (Ser)" evidence="1">
    <location>
        <position position="25"/>
    </location>
</feature>
<comment type="function">
    <text evidence="1">Catalyzes the pyruvoyl-dependent decarboxylation of aspartate to produce beta-alanine.</text>
</comment>
<comment type="catalytic activity">
    <reaction evidence="1">
        <text>L-aspartate + H(+) = beta-alanine + CO2</text>
        <dbReference type="Rhea" id="RHEA:19497"/>
        <dbReference type="ChEBI" id="CHEBI:15378"/>
        <dbReference type="ChEBI" id="CHEBI:16526"/>
        <dbReference type="ChEBI" id="CHEBI:29991"/>
        <dbReference type="ChEBI" id="CHEBI:57966"/>
        <dbReference type="EC" id="4.1.1.11"/>
    </reaction>
</comment>
<comment type="cofactor">
    <cofactor evidence="1">
        <name>pyruvate</name>
        <dbReference type="ChEBI" id="CHEBI:15361"/>
    </cofactor>
    <text evidence="1">Binds 1 pyruvoyl group covalently per subunit.</text>
</comment>
<comment type="pathway">
    <text evidence="1">Cofactor biosynthesis; (R)-pantothenate biosynthesis; beta-alanine from L-aspartate: step 1/1.</text>
</comment>
<comment type="subunit">
    <text evidence="1">Heterooctamer of four alpha and four beta subunits.</text>
</comment>
<comment type="subcellular location">
    <subcellularLocation>
        <location evidence="1">Cytoplasm</location>
    </subcellularLocation>
</comment>
<comment type="PTM">
    <text evidence="1">Is synthesized initially as an inactive proenzyme, which is activated by self-cleavage at a specific serine bond to produce a beta-subunit with a hydroxyl group at its C-terminus and an alpha-subunit with a pyruvoyl group at its N-terminus.</text>
</comment>
<comment type="similarity">
    <text evidence="1">Belongs to the PanD family.</text>
</comment>
<gene>
    <name evidence="1" type="primary">panD</name>
    <name type="ordered locus">AnaeK_4167</name>
</gene>